<organism>
    <name type="scientific">Mus musculus</name>
    <name type="common">Mouse</name>
    <dbReference type="NCBI Taxonomy" id="10090"/>
    <lineage>
        <taxon>Eukaryota</taxon>
        <taxon>Metazoa</taxon>
        <taxon>Chordata</taxon>
        <taxon>Craniata</taxon>
        <taxon>Vertebrata</taxon>
        <taxon>Euteleostomi</taxon>
        <taxon>Mammalia</taxon>
        <taxon>Eutheria</taxon>
        <taxon>Euarchontoglires</taxon>
        <taxon>Glires</taxon>
        <taxon>Rodentia</taxon>
        <taxon>Myomorpha</taxon>
        <taxon>Muroidea</taxon>
        <taxon>Muridae</taxon>
        <taxon>Murinae</taxon>
        <taxon>Mus</taxon>
        <taxon>Mus</taxon>
    </lineage>
</organism>
<accession>Q5GIG6</accession>
<accession>B2RTJ7</accession>
<accession>Q5GIG5</accession>
<comment type="function">
    <text evidence="2">May play a role in cardiac physiology.</text>
</comment>
<comment type="catalytic activity">
    <reaction evidence="2">
        <text>L-seryl-[protein] + ATP = O-phospho-L-seryl-[protein] + ADP + H(+)</text>
        <dbReference type="Rhea" id="RHEA:17989"/>
        <dbReference type="Rhea" id="RHEA-COMP:9863"/>
        <dbReference type="Rhea" id="RHEA-COMP:11604"/>
        <dbReference type="ChEBI" id="CHEBI:15378"/>
        <dbReference type="ChEBI" id="CHEBI:29999"/>
        <dbReference type="ChEBI" id="CHEBI:30616"/>
        <dbReference type="ChEBI" id="CHEBI:83421"/>
        <dbReference type="ChEBI" id="CHEBI:456216"/>
        <dbReference type="EC" id="2.7.11.1"/>
    </reaction>
</comment>
<comment type="catalytic activity">
    <reaction evidence="2">
        <text>L-threonyl-[protein] + ATP = O-phospho-L-threonyl-[protein] + ADP + H(+)</text>
        <dbReference type="Rhea" id="RHEA:46608"/>
        <dbReference type="Rhea" id="RHEA-COMP:11060"/>
        <dbReference type="Rhea" id="RHEA-COMP:11605"/>
        <dbReference type="ChEBI" id="CHEBI:15378"/>
        <dbReference type="ChEBI" id="CHEBI:30013"/>
        <dbReference type="ChEBI" id="CHEBI:30616"/>
        <dbReference type="ChEBI" id="CHEBI:61977"/>
        <dbReference type="ChEBI" id="CHEBI:456216"/>
        <dbReference type="EC" id="2.7.11.1"/>
    </reaction>
</comment>
<comment type="cofactor">
    <cofactor evidence="2">
        <name>Mg(2+)</name>
        <dbReference type="ChEBI" id="CHEBI:18420"/>
    </cofactor>
</comment>
<comment type="subunit">
    <text evidence="1">Interacts with TNNI3, ACTC, ACTA1, MYBPC3, AIP, FABP3 and HADHB.</text>
</comment>
<comment type="subcellular location">
    <subcellularLocation>
        <location evidence="1">Nucleus</location>
    </subcellularLocation>
    <subcellularLocation>
        <location evidence="1">Cytoplasm</location>
    </subcellularLocation>
    <text evidence="1">Expressed at lower levels in the cytoplasm.</text>
</comment>
<comment type="alternative products">
    <event type="alternative splicing"/>
    <isoform>
        <id>Q5GIG6-1</id>
        <name>1</name>
        <sequence type="displayed"/>
    </isoform>
    <isoform>
        <id>Q5GIG6-2</id>
        <name>2</name>
        <sequence type="described" ref="VSP_051886 VSP_051887"/>
    </isoform>
</comment>
<comment type="PTM">
    <text evidence="2">Autophosphorylated.</text>
</comment>
<comment type="similarity">
    <text evidence="7">Belongs to the protein kinase superfamily. TKL Ser/Thr protein kinase family. MAP kinase kinase kinase subfamily.</text>
</comment>
<proteinExistence type="evidence at transcript level"/>
<sequence length="834" mass="92575">MGNYKSRPTQTCSDEWKKKVSESYAIIIERLEDDLQIKENEFQELRHIFGSDEAFSEVSLNYRTERGLSLLHLCCACGGNKSHIRALMLKGLRPSRLTRNGFPALHLAVYKDSLELITSLLHSGADVQQAGYGGLTALHIAAIAGHPEAVEVLLQHGANVNVQDAVFFTPLHIAAYYGHEQVTSVLLKFGADVNVSGEVGDRPLHLASAKGFFNIVKLLVEGNKADVNAQDNEDHVPLHFCSRFGHHNIVSYLLQSDLEVQPHVINIYGDTPLHLACYNGNFEVAKEIVHVTGTESLTKENIFSETAFHSACTYGKNIDLVKFLLDQNAVNINHRGRDGHTGLHSACYHGHIRLVQFLLDNGADMNLVACDPSRSSGEKDEQTCLMWAYEKGHDAIVTLLKHYKRPQDELPCNEYSQPGGDGSYVSVPSPLGKIKSMTKEKADVLLLRAELPSRFHLQLSEIEFHEIIGSGSFGKVYKGRCRNKIVAIKRYRANTYCSKSDVDMFCREVSILCQLNHPCVVQFVGACLDDPSQFAIVTQYISGGSLFSLLHEQKRILDLQSKLIIAVDVAKGMEYLHSLTQPIIHRDLNSHNILLYEDGHAVVADFGESRFLQSLDEDNMTKQPGNLRWMAPEVFTQCTRYTIKADVFSYALCLWELLTGEIPFAHLKPAAAAADMAYHHIRPPIGYSIPKPISSLLMRGWNACPEGRPEFSEVVRKLEECLCNVELMSPASSNSSGSLSPSSSSDCLLSRGGPGRSHVAALRSRFELEYALNARSYTGWPQSVGTHTNPGLSLEEMNRGAQYSAVDKYGYVSDPMSPMHLHSRRNSGSFEDGN</sequence>
<gene>
    <name evidence="9" type="primary">Tnni3k</name>
    <name type="synonym">Cark</name>
</gene>
<feature type="initiator methionine" description="Removed" evidence="3">
    <location>
        <position position="1"/>
    </location>
</feature>
<feature type="chain" id="PRO_0000086758" description="Serine/threonine-protein kinase TNNI3K">
    <location>
        <begin position="2"/>
        <end position="834"/>
    </location>
</feature>
<feature type="repeat" description="ANK 1">
    <location>
        <begin position="66"/>
        <end position="96"/>
    </location>
</feature>
<feature type="repeat" description="ANK 2">
    <location>
        <begin position="100"/>
        <end position="129"/>
    </location>
</feature>
<feature type="repeat" description="ANK 3">
    <location>
        <begin position="133"/>
        <end position="162"/>
    </location>
</feature>
<feature type="repeat" description="ANK 4">
    <location>
        <begin position="166"/>
        <end position="195"/>
    </location>
</feature>
<feature type="repeat" description="ANK 5">
    <location>
        <begin position="199"/>
        <end position="229"/>
    </location>
</feature>
<feature type="repeat" description="ANK 6">
    <location>
        <begin position="233"/>
        <end position="262"/>
    </location>
</feature>
<feature type="repeat" description="ANK 7">
    <location>
        <begin position="268"/>
        <end position="297"/>
    </location>
</feature>
<feature type="repeat" description="ANK 8">
    <location>
        <begin position="303"/>
        <end position="334"/>
    </location>
</feature>
<feature type="repeat" description="ANK 9">
    <location>
        <begin position="338"/>
        <end position="367"/>
    </location>
</feature>
<feature type="repeat" description="ANK 10">
    <location>
        <begin position="380"/>
        <end position="409"/>
    </location>
</feature>
<feature type="domain" description="Protein kinase" evidence="4">
    <location>
        <begin position="462"/>
        <end position="722"/>
    </location>
</feature>
<feature type="region of interest" description="Disordered" evidence="5">
    <location>
        <begin position="815"/>
        <end position="834"/>
    </location>
</feature>
<feature type="coiled-coil region" evidence="3">
    <location>
        <begin position="21"/>
        <end position="49"/>
    </location>
</feature>
<feature type="active site" description="Proton acceptor" evidence="4">
    <location>
        <position position="587"/>
    </location>
</feature>
<feature type="binding site" evidence="4">
    <location>
        <begin position="468"/>
        <end position="476"/>
    </location>
    <ligand>
        <name>ATP</name>
        <dbReference type="ChEBI" id="CHEBI:30616"/>
    </ligand>
</feature>
<feature type="binding site" evidence="4">
    <location>
        <position position="489"/>
    </location>
    <ligand>
        <name>ATP</name>
        <dbReference type="ChEBI" id="CHEBI:30616"/>
    </ligand>
</feature>
<feature type="lipid moiety-binding region" description="N-myristoyl glycine" evidence="3">
    <location>
        <position position="2"/>
    </location>
</feature>
<feature type="splice variant" id="VSP_051886" description="In isoform 2." evidence="6">
    <original>AAAAAD</original>
    <variation>GKTRVL</variation>
    <location>
        <begin position="670"/>
        <end position="675"/>
    </location>
</feature>
<feature type="splice variant" id="VSP_051887" description="In isoform 2." evidence="6">
    <location>
        <begin position="676"/>
        <end position="834"/>
    </location>
</feature>
<feature type="sequence conflict" description="In Ref. 1; AAS98608/AAS98609." evidence="7" ref="1">
    <original>T</original>
    <variation>I</variation>
    <location>
        <position position="659"/>
    </location>
</feature>
<keyword id="KW-0025">Alternative splicing</keyword>
<keyword id="KW-0040">ANK repeat</keyword>
<keyword id="KW-0067">ATP-binding</keyword>
<keyword id="KW-0175">Coiled coil</keyword>
<keyword id="KW-0963">Cytoplasm</keyword>
<keyword id="KW-0418">Kinase</keyword>
<keyword id="KW-0449">Lipoprotein</keyword>
<keyword id="KW-0460">Magnesium</keyword>
<keyword id="KW-0479">Metal-binding</keyword>
<keyword id="KW-0519">Myristate</keyword>
<keyword id="KW-0547">Nucleotide-binding</keyword>
<keyword id="KW-0539">Nucleus</keyword>
<keyword id="KW-0597">Phosphoprotein</keyword>
<keyword id="KW-1185">Reference proteome</keyword>
<keyword id="KW-0677">Repeat</keyword>
<keyword id="KW-0723">Serine/threonine-protein kinase</keyword>
<keyword id="KW-0808">Transferase</keyword>
<evidence type="ECO:0000250" key="1"/>
<evidence type="ECO:0000250" key="2">
    <source>
        <dbReference type="UniProtKB" id="Q59H18"/>
    </source>
</evidence>
<evidence type="ECO:0000255" key="3"/>
<evidence type="ECO:0000255" key="4">
    <source>
        <dbReference type="PROSITE-ProRule" id="PRU00159"/>
    </source>
</evidence>
<evidence type="ECO:0000256" key="5">
    <source>
        <dbReference type="SAM" id="MobiDB-lite"/>
    </source>
</evidence>
<evidence type="ECO:0000303" key="6">
    <source ref="1"/>
</evidence>
<evidence type="ECO:0000305" key="7"/>
<evidence type="ECO:0000312" key="8">
    <source>
        <dbReference type="EMBL" id="AAS98608.1"/>
    </source>
</evidence>
<evidence type="ECO:0000312" key="9">
    <source>
        <dbReference type="MGI" id="MGI:2443276"/>
    </source>
</evidence>
<dbReference type="EC" id="2.7.11.1"/>
<dbReference type="EMBL" id="AY526095">
    <property type="protein sequence ID" value="AAS98608.1"/>
    <property type="molecule type" value="mRNA"/>
</dbReference>
<dbReference type="EMBL" id="AY526096">
    <property type="protein sequence ID" value="AAS98609.1"/>
    <property type="molecule type" value="mRNA"/>
</dbReference>
<dbReference type="EMBL" id="AC125097">
    <property type="status" value="NOT_ANNOTATED_CDS"/>
    <property type="molecule type" value="Genomic_DNA"/>
</dbReference>
<dbReference type="EMBL" id="AC124174">
    <property type="status" value="NOT_ANNOTATED_CDS"/>
    <property type="molecule type" value="Genomic_DNA"/>
</dbReference>
<dbReference type="EMBL" id="AC144762">
    <property type="status" value="NOT_ANNOTATED_CDS"/>
    <property type="molecule type" value="Genomic_DNA"/>
</dbReference>
<dbReference type="EMBL" id="BC139368">
    <property type="protein sequence ID" value="AAI39369.1"/>
    <property type="molecule type" value="mRNA"/>
</dbReference>
<dbReference type="EMBL" id="BC139394">
    <property type="protein sequence ID" value="AAI39395.1"/>
    <property type="molecule type" value="mRNA"/>
</dbReference>
<dbReference type="CCDS" id="CCDS17928.1">
    <molecule id="Q5GIG6-1"/>
</dbReference>
<dbReference type="RefSeq" id="NP_796040.3">
    <molecule id="Q5GIG6-1"/>
    <property type="nucleotide sequence ID" value="NM_177066.5"/>
</dbReference>
<dbReference type="SMR" id="Q5GIG6"/>
<dbReference type="FunCoup" id="Q5GIG6">
    <property type="interactions" value="1412"/>
</dbReference>
<dbReference type="STRING" id="10090.ENSMUSP00000070561"/>
<dbReference type="BindingDB" id="Q5GIG6"/>
<dbReference type="ChEMBL" id="CHEMBL4879467"/>
<dbReference type="GuidetoPHARMACOLOGY" id="2247"/>
<dbReference type="GlyGen" id="Q5GIG6">
    <property type="glycosylation" value="1 site, 1 N-linked glycan (1 site)"/>
</dbReference>
<dbReference type="iPTMnet" id="Q5GIG6"/>
<dbReference type="PhosphoSitePlus" id="Q5GIG6"/>
<dbReference type="PaxDb" id="10090-ENSMUSP00000070561"/>
<dbReference type="ProteomicsDB" id="258934">
    <molecule id="Q5GIG6-1"/>
</dbReference>
<dbReference type="ProteomicsDB" id="258935">
    <molecule id="Q5GIG6-2"/>
</dbReference>
<dbReference type="DNASU" id="435766"/>
<dbReference type="Ensembl" id="ENSMUST00000064076.6">
    <molecule id="Q5GIG6-1"/>
    <property type="protein sequence ID" value="ENSMUSP00000070561.4"/>
    <property type="gene ID" value="ENSMUSG00000040086.14"/>
</dbReference>
<dbReference type="Ensembl" id="ENSMUST00000143410.7">
    <molecule id="Q5GIG6-2"/>
    <property type="protein sequence ID" value="ENSMUSP00000122478.2"/>
    <property type="gene ID" value="ENSMUSG00000040086.14"/>
</dbReference>
<dbReference type="GeneID" id="435766"/>
<dbReference type="KEGG" id="mmu:435766"/>
<dbReference type="UCSC" id="uc008rus.2">
    <molecule id="Q5GIG6-1"/>
    <property type="organism name" value="mouse"/>
</dbReference>
<dbReference type="AGR" id="MGI:2443276"/>
<dbReference type="CTD" id="51086"/>
<dbReference type="MGI" id="MGI:2443276">
    <property type="gene designation" value="Tnni3k"/>
</dbReference>
<dbReference type="VEuPathDB" id="HostDB:ENSMUSG00000040086"/>
<dbReference type="eggNOG" id="KOG0192">
    <property type="taxonomic scope" value="Eukaryota"/>
</dbReference>
<dbReference type="GeneTree" id="ENSGT00940000159131"/>
<dbReference type="HOGENOM" id="CLU_017658_0_0_1"/>
<dbReference type="InParanoid" id="Q5GIG6"/>
<dbReference type="OMA" id="NHPCIIH"/>
<dbReference type="OrthoDB" id="339325at2759"/>
<dbReference type="PhylomeDB" id="Q5GIG6"/>
<dbReference type="TreeFam" id="TF317710"/>
<dbReference type="BioGRID-ORCS" id="435766">
    <property type="hits" value="4 hits in 80 CRISPR screens"/>
</dbReference>
<dbReference type="ChiTaRS" id="Tnni3k">
    <property type="organism name" value="mouse"/>
</dbReference>
<dbReference type="PRO" id="PR:Q5GIG6"/>
<dbReference type="Proteomes" id="UP000000589">
    <property type="component" value="Chromosome 3"/>
</dbReference>
<dbReference type="RNAct" id="Q5GIG6">
    <property type="molecule type" value="protein"/>
</dbReference>
<dbReference type="Bgee" id="ENSMUSG00000040086">
    <property type="expression patterns" value="Expressed in myocardium of ventricle and 12 other cell types or tissues"/>
</dbReference>
<dbReference type="GO" id="GO:0005737">
    <property type="term" value="C:cytoplasm"/>
    <property type="evidence" value="ECO:0007669"/>
    <property type="project" value="UniProtKB-SubCell"/>
</dbReference>
<dbReference type="GO" id="GO:0005634">
    <property type="term" value="C:nucleus"/>
    <property type="evidence" value="ECO:0007669"/>
    <property type="project" value="UniProtKB-SubCell"/>
</dbReference>
<dbReference type="GO" id="GO:0005524">
    <property type="term" value="F:ATP binding"/>
    <property type="evidence" value="ECO:0007669"/>
    <property type="project" value="UniProtKB-KW"/>
</dbReference>
<dbReference type="GO" id="GO:0046872">
    <property type="term" value="F:metal ion binding"/>
    <property type="evidence" value="ECO:0007669"/>
    <property type="project" value="UniProtKB-KW"/>
</dbReference>
<dbReference type="GO" id="GO:0106310">
    <property type="term" value="F:protein serine kinase activity"/>
    <property type="evidence" value="ECO:0007669"/>
    <property type="project" value="RHEA"/>
</dbReference>
<dbReference type="GO" id="GO:0004674">
    <property type="term" value="F:protein serine/threonine kinase activity"/>
    <property type="evidence" value="ECO:0007669"/>
    <property type="project" value="UniProtKB-KW"/>
</dbReference>
<dbReference type="GO" id="GO:0086069">
    <property type="term" value="P:bundle of His cell to Purkinje myocyte communication"/>
    <property type="evidence" value="ECO:0007669"/>
    <property type="project" value="Ensembl"/>
</dbReference>
<dbReference type="GO" id="GO:1903779">
    <property type="term" value="P:regulation of cardiac conduction"/>
    <property type="evidence" value="ECO:0000315"/>
    <property type="project" value="BHF-UCL"/>
</dbReference>
<dbReference type="GO" id="GO:0055117">
    <property type="term" value="P:regulation of cardiac muscle contraction"/>
    <property type="evidence" value="ECO:0007669"/>
    <property type="project" value="Ensembl"/>
</dbReference>
<dbReference type="GO" id="GO:0002027">
    <property type="term" value="P:regulation of heart rate"/>
    <property type="evidence" value="ECO:0000315"/>
    <property type="project" value="BHF-UCL"/>
</dbReference>
<dbReference type="CDD" id="cd14064">
    <property type="entry name" value="PKc_TNNI3K"/>
    <property type="match status" value="1"/>
</dbReference>
<dbReference type="FunFam" id="1.10.510.10:FF:000259">
    <property type="entry name" value="Serine/threonine-protein kinase TNNI3K"/>
    <property type="match status" value="1"/>
</dbReference>
<dbReference type="FunFam" id="1.25.40.20:FF:000077">
    <property type="entry name" value="Serine/threonine-protein kinase TNNI3K"/>
    <property type="match status" value="1"/>
</dbReference>
<dbReference type="FunFam" id="1.25.40.20:FF:000089">
    <property type="entry name" value="serine/threonine-protein kinase TNNI3K"/>
    <property type="match status" value="1"/>
</dbReference>
<dbReference type="Gene3D" id="1.25.40.20">
    <property type="entry name" value="Ankyrin repeat-containing domain"/>
    <property type="match status" value="3"/>
</dbReference>
<dbReference type="Gene3D" id="1.10.510.10">
    <property type="entry name" value="Transferase(Phosphotransferase) domain 1"/>
    <property type="match status" value="1"/>
</dbReference>
<dbReference type="InterPro" id="IPR002110">
    <property type="entry name" value="Ankyrin_rpt"/>
</dbReference>
<dbReference type="InterPro" id="IPR036770">
    <property type="entry name" value="Ankyrin_rpt-contain_sf"/>
</dbReference>
<dbReference type="InterPro" id="IPR011009">
    <property type="entry name" value="Kinase-like_dom_sf"/>
</dbReference>
<dbReference type="InterPro" id="IPR000719">
    <property type="entry name" value="Prot_kinase_dom"/>
</dbReference>
<dbReference type="InterPro" id="IPR017441">
    <property type="entry name" value="Protein_kinase_ATP_BS"/>
</dbReference>
<dbReference type="InterPro" id="IPR001245">
    <property type="entry name" value="Ser-Thr/Tyr_kinase_cat_dom"/>
</dbReference>
<dbReference type="PANTHER" id="PTHR24198">
    <property type="entry name" value="ANKYRIN REPEAT AND PROTEIN KINASE DOMAIN-CONTAINING PROTEIN"/>
    <property type="match status" value="1"/>
</dbReference>
<dbReference type="PANTHER" id="PTHR24198:SF183">
    <property type="entry name" value="SUPPRESSOR_ENHANCER OF LIN-12"/>
    <property type="match status" value="1"/>
</dbReference>
<dbReference type="Pfam" id="PF00023">
    <property type="entry name" value="Ank"/>
    <property type="match status" value="2"/>
</dbReference>
<dbReference type="Pfam" id="PF12796">
    <property type="entry name" value="Ank_2"/>
    <property type="match status" value="3"/>
</dbReference>
<dbReference type="Pfam" id="PF07714">
    <property type="entry name" value="PK_Tyr_Ser-Thr"/>
    <property type="match status" value="1"/>
</dbReference>
<dbReference type="PRINTS" id="PR01415">
    <property type="entry name" value="ANKYRIN"/>
</dbReference>
<dbReference type="SMART" id="SM00248">
    <property type="entry name" value="ANK"/>
    <property type="match status" value="10"/>
</dbReference>
<dbReference type="SUPFAM" id="SSF48403">
    <property type="entry name" value="Ankyrin repeat"/>
    <property type="match status" value="1"/>
</dbReference>
<dbReference type="SUPFAM" id="SSF56112">
    <property type="entry name" value="Protein kinase-like (PK-like)"/>
    <property type="match status" value="1"/>
</dbReference>
<dbReference type="PROSITE" id="PS50297">
    <property type="entry name" value="ANK_REP_REGION"/>
    <property type="match status" value="1"/>
</dbReference>
<dbReference type="PROSITE" id="PS50088">
    <property type="entry name" value="ANK_REPEAT"/>
    <property type="match status" value="6"/>
</dbReference>
<dbReference type="PROSITE" id="PS00107">
    <property type="entry name" value="PROTEIN_KINASE_ATP"/>
    <property type="match status" value="1"/>
</dbReference>
<dbReference type="PROSITE" id="PS50011">
    <property type="entry name" value="PROTEIN_KINASE_DOM"/>
    <property type="match status" value="1"/>
</dbReference>
<name>TNI3K_MOUSE</name>
<reference evidence="7 8" key="1">
    <citation type="submission" date="2004-01" db="EMBL/GenBank/DDBJ databases">
        <authorList>
            <person name="Chen C."/>
            <person name="Zhen Y."/>
            <person name="Liu Y."/>
            <person name="Xun L."/>
            <person name="Chen J."/>
            <person name="Zhang L."/>
            <person name="Hui R."/>
        </authorList>
    </citation>
    <scope>NUCLEOTIDE SEQUENCE [MRNA] (ISOFORMS 1 AND 2)</scope>
    <source>
        <strain evidence="8">KM</strain>
    </source>
</reference>
<reference key="2">
    <citation type="journal article" date="2009" name="PLoS Biol.">
        <title>Lineage-specific biology revealed by a finished genome assembly of the mouse.</title>
        <authorList>
            <person name="Church D.M."/>
            <person name="Goodstadt L."/>
            <person name="Hillier L.W."/>
            <person name="Zody M.C."/>
            <person name="Goldstein S."/>
            <person name="She X."/>
            <person name="Bult C.J."/>
            <person name="Agarwala R."/>
            <person name="Cherry J.L."/>
            <person name="DiCuccio M."/>
            <person name="Hlavina W."/>
            <person name="Kapustin Y."/>
            <person name="Meric P."/>
            <person name="Maglott D."/>
            <person name="Birtle Z."/>
            <person name="Marques A.C."/>
            <person name="Graves T."/>
            <person name="Zhou S."/>
            <person name="Teague B."/>
            <person name="Potamousis K."/>
            <person name="Churas C."/>
            <person name="Place M."/>
            <person name="Herschleb J."/>
            <person name="Runnheim R."/>
            <person name="Forrest D."/>
            <person name="Amos-Landgraf J."/>
            <person name="Schwartz D.C."/>
            <person name="Cheng Z."/>
            <person name="Lindblad-Toh K."/>
            <person name="Eichler E.E."/>
            <person name="Ponting C.P."/>
        </authorList>
    </citation>
    <scope>NUCLEOTIDE SEQUENCE [LARGE SCALE GENOMIC DNA]</scope>
    <source>
        <strain>C57BL/6J</strain>
    </source>
</reference>
<reference key="3">
    <citation type="journal article" date="2004" name="Genome Res.">
        <title>The status, quality, and expansion of the NIH full-length cDNA project: the Mammalian Gene Collection (MGC).</title>
        <authorList>
            <consortium name="The MGC Project Team"/>
        </authorList>
    </citation>
    <scope>NUCLEOTIDE SEQUENCE [LARGE SCALE MRNA]</scope>
    <source>
        <tissue>Brain</tissue>
    </source>
</reference>
<protein>
    <recommendedName>
        <fullName>Serine/threonine-protein kinase TNNI3K</fullName>
        <ecNumber>2.7.11.1</ecNumber>
    </recommendedName>
    <alternativeName>
        <fullName>Cardiac ankyrin repeat kinase</fullName>
    </alternativeName>
    <alternativeName>
        <fullName>TNNI3-interacting kinase</fullName>
    </alternativeName>
</protein>